<comment type="cofactor">
    <cofactor evidence="3">
        <name>[4Fe-4S] cluster</name>
        <dbReference type="ChEBI" id="CHEBI:49883"/>
    </cofactor>
    <text evidence="3">Binds 2 [4Fe-4S] clusters.</text>
</comment>
<comment type="sequence caution" evidence="3">
    <conflict type="erroneous initiation">
        <sequence resource="EMBL-CDS" id="AAG60745"/>
    </conflict>
    <text>Extended N-terminus.</text>
</comment>
<keyword id="KW-0004">4Fe-4S</keyword>
<keyword id="KW-0249">Electron transport</keyword>
<keyword id="KW-0408">Iron</keyword>
<keyword id="KW-0411">Iron-sulfur</keyword>
<keyword id="KW-0479">Metal-binding</keyword>
<keyword id="KW-0535">Nitrogen fixation</keyword>
<keyword id="KW-1185">Reference proteome</keyword>
<keyword id="KW-0677">Repeat</keyword>
<keyword id="KW-0813">Transport</keyword>
<gene>
    <name type="primary">frxA</name>
    <name type="ordered locus">bsr1760</name>
</gene>
<name>FDXN_BRADU</name>
<reference key="1">
    <citation type="journal article" date="1988" name="J. Bacteriol.">
        <title>Identification of a new Bradyrhizobium japonicum gene (frxA) encoding a ferredoxinlike protein.</title>
        <authorList>
            <person name="Ebeling S."/>
            <person name="Noti J.D."/>
            <person name="Hennecke H."/>
        </authorList>
    </citation>
    <scope>NUCLEOTIDE SEQUENCE [GENOMIC DNA]</scope>
</reference>
<reference key="2">
    <citation type="journal article" date="2001" name="J. Bacteriol.">
        <title>Potential symbiosis-specific genes uncovered by sequencing a 410-kb DNA region of the Bradyrhizobium japonicum chromosome.</title>
        <authorList>
            <person name="Goettfert M."/>
            <person name="Roethlisberger S."/>
            <person name="Kuendig C."/>
            <person name="Beck C."/>
            <person name="Marty R."/>
            <person name="Hennecke H."/>
        </authorList>
    </citation>
    <scope>NUCLEOTIDE SEQUENCE [GENOMIC DNA]</scope>
    <source>
        <strain>USDA 110spc4</strain>
    </source>
</reference>
<reference key="3">
    <citation type="journal article" date="2002" name="DNA Res.">
        <title>Complete genomic sequence of nitrogen-fixing symbiotic bacterium Bradyrhizobium japonicum USDA110.</title>
        <authorList>
            <person name="Kaneko T."/>
            <person name="Nakamura Y."/>
            <person name="Sato S."/>
            <person name="Minamisawa K."/>
            <person name="Uchiumi T."/>
            <person name="Sasamoto S."/>
            <person name="Watanabe A."/>
            <person name="Idesawa K."/>
            <person name="Iriguchi M."/>
            <person name="Kawashima K."/>
            <person name="Kohara M."/>
            <person name="Matsumoto M."/>
            <person name="Shimpo S."/>
            <person name="Tsuruoka H."/>
            <person name="Wada T."/>
            <person name="Yamada M."/>
            <person name="Tabata S."/>
        </authorList>
    </citation>
    <scope>NUCLEOTIDE SEQUENCE [LARGE SCALE GENOMIC DNA]</scope>
    <source>
        <strain>JCM 10833 / BCRC 13528 / IAM 13628 / NBRC 14792 / USDA 110</strain>
    </source>
</reference>
<organism>
    <name type="scientific">Bradyrhizobium diazoefficiens (strain JCM 10833 / BCRC 13528 / IAM 13628 / NBRC 14792 / USDA 110)</name>
    <dbReference type="NCBI Taxonomy" id="224911"/>
    <lineage>
        <taxon>Bacteria</taxon>
        <taxon>Pseudomonadati</taxon>
        <taxon>Pseudomonadota</taxon>
        <taxon>Alphaproteobacteria</taxon>
        <taxon>Hyphomicrobiales</taxon>
        <taxon>Nitrobacteraceae</taxon>
        <taxon>Bradyrhizobium</taxon>
    </lineage>
</organism>
<feature type="chain" id="PRO_0000159169" description="Ferredoxin-like protein in nif region">
    <location>
        <begin position="1"/>
        <end position="74"/>
    </location>
</feature>
<feature type="domain" description="4Fe-4S ferredoxin-type" evidence="2">
    <location>
        <begin position="2"/>
        <end position="30"/>
    </location>
</feature>
<feature type="binding site" evidence="1">
    <location>
        <position position="10"/>
    </location>
    <ligand>
        <name>[4Fe-4S] cluster</name>
        <dbReference type="ChEBI" id="CHEBI:49883"/>
        <label>1</label>
    </ligand>
</feature>
<feature type="binding site" evidence="1">
    <location>
        <position position="13"/>
    </location>
    <ligand>
        <name>[4Fe-4S] cluster</name>
        <dbReference type="ChEBI" id="CHEBI:49883"/>
        <label>1</label>
    </ligand>
</feature>
<feature type="binding site" evidence="1">
    <location>
        <position position="16"/>
    </location>
    <ligand>
        <name>[4Fe-4S] cluster</name>
        <dbReference type="ChEBI" id="CHEBI:49883"/>
        <label>1</label>
    </ligand>
</feature>
<feature type="binding site" evidence="1">
    <location>
        <position position="20"/>
    </location>
    <ligand>
        <name>[4Fe-4S] cluster</name>
        <dbReference type="ChEBI" id="CHEBI:49883"/>
        <label>2</label>
    </ligand>
</feature>
<feature type="binding site" evidence="1">
    <location>
        <position position="39"/>
    </location>
    <ligand>
        <name>[4Fe-4S] cluster</name>
        <dbReference type="ChEBI" id="CHEBI:49883"/>
        <label>2</label>
    </ligand>
</feature>
<feature type="binding site" evidence="1">
    <location>
        <position position="51"/>
    </location>
    <ligand>
        <name>[4Fe-4S] cluster</name>
        <dbReference type="ChEBI" id="CHEBI:49883"/>
        <label>2</label>
    </ligand>
</feature>
<feature type="binding site" evidence="1">
    <location>
        <position position="55"/>
    </location>
    <ligand>
        <name>[4Fe-4S] cluster</name>
        <dbReference type="ChEBI" id="CHEBI:49883"/>
        <label>1</label>
    </ligand>
</feature>
<feature type="sequence conflict" description="In Ref. 1; AAA26222." evidence="3" ref="1">
    <original>CV</original>
    <variation>LR</variation>
    <location>
        <begin position="42"/>
        <end position="43"/>
    </location>
</feature>
<protein>
    <recommendedName>
        <fullName>Ferredoxin-like protein in nif region</fullName>
    </recommendedName>
</protein>
<evidence type="ECO:0000250" key="1"/>
<evidence type="ECO:0000255" key="2">
    <source>
        <dbReference type="PROSITE-ProRule" id="PRU00711"/>
    </source>
</evidence>
<evidence type="ECO:0000305" key="3"/>
<proteinExistence type="predicted"/>
<dbReference type="EMBL" id="M13688">
    <property type="protein sequence ID" value="AAA26222.1"/>
    <property type="molecule type" value="Genomic_DNA"/>
</dbReference>
<dbReference type="EMBL" id="AH010242">
    <property type="protein sequence ID" value="AAG60745.1"/>
    <property type="status" value="ALT_INIT"/>
    <property type="molecule type" value="Genomic_DNA"/>
</dbReference>
<dbReference type="EMBL" id="BA000040">
    <property type="protein sequence ID" value="BAC47025.1"/>
    <property type="molecule type" value="Genomic_DNA"/>
</dbReference>
<dbReference type="RefSeq" id="NP_768400.1">
    <property type="nucleotide sequence ID" value="NC_004463.1"/>
</dbReference>
<dbReference type="RefSeq" id="WP_011084569.1">
    <property type="nucleotide sequence ID" value="NZ_CP011360.1"/>
</dbReference>
<dbReference type="SMR" id="P27394"/>
<dbReference type="FunCoup" id="P27394">
    <property type="interactions" value="88"/>
</dbReference>
<dbReference type="STRING" id="224911.AAV28_05725"/>
<dbReference type="EnsemblBacteria" id="BAC47025">
    <property type="protein sequence ID" value="BAC47025"/>
    <property type="gene ID" value="BAC47025"/>
</dbReference>
<dbReference type="KEGG" id="bja:bsr1760"/>
<dbReference type="PATRIC" id="fig|224911.44.peg.1225"/>
<dbReference type="eggNOG" id="COG1145">
    <property type="taxonomic scope" value="Bacteria"/>
</dbReference>
<dbReference type="HOGENOM" id="CLU_139698_11_0_5"/>
<dbReference type="InParanoid" id="P27394"/>
<dbReference type="OrthoDB" id="9800445at2"/>
<dbReference type="PhylomeDB" id="P27394"/>
<dbReference type="Proteomes" id="UP000002526">
    <property type="component" value="Chromosome"/>
</dbReference>
<dbReference type="GO" id="GO:0005737">
    <property type="term" value="C:cytoplasm"/>
    <property type="evidence" value="ECO:0000318"/>
    <property type="project" value="GO_Central"/>
</dbReference>
<dbReference type="GO" id="GO:0051539">
    <property type="term" value="F:4 iron, 4 sulfur cluster binding"/>
    <property type="evidence" value="ECO:0007669"/>
    <property type="project" value="UniProtKB-KW"/>
</dbReference>
<dbReference type="GO" id="GO:0046872">
    <property type="term" value="F:metal ion binding"/>
    <property type="evidence" value="ECO:0007669"/>
    <property type="project" value="UniProtKB-KW"/>
</dbReference>
<dbReference type="GO" id="GO:0009399">
    <property type="term" value="P:nitrogen fixation"/>
    <property type="evidence" value="ECO:0007669"/>
    <property type="project" value="UniProtKB-KW"/>
</dbReference>
<dbReference type="FunFam" id="3.30.70.20:FF:000045">
    <property type="entry name" value="Ferredoxin, 4Fe-4S"/>
    <property type="match status" value="1"/>
</dbReference>
<dbReference type="Gene3D" id="3.30.70.20">
    <property type="match status" value="1"/>
</dbReference>
<dbReference type="InterPro" id="IPR017896">
    <property type="entry name" value="4Fe4S_Fe-S-bd"/>
</dbReference>
<dbReference type="InterPro" id="IPR017900">
    <property type="entry name" value="4Fe4S_Fe_S_CS"/>
</dbReference>
<dbReference type="Pfam" id="PF00037">
    <property type="entry name" value="Fer4"/>
    <property type="match status" value="1"/>
</dbReference>
<dbReference type="SUPFAM" id="SSF54862">
    <property type="entry name" value="4Fe-4S ferredoxins"/>
    <property type="match status" value="1"/>
</dbReference>
<dbReference type="PROSITE" id="PS00198">
    <property type="entry name" value="4FE4S_FER_1"/>
    <property type="match status" value="1"/>
</dbReference>
<dbReference type="PROSITE" id="PS51379">
    <property type="entry name" value="4FE4S_FER_2"/>
    <property type="match status" value="1"/>
</dbReference>
<sequence length="74" mass="7806">MPFKIIASQCTSCSACEPLCPNVAISEKGGNFVIEAAKCSECVGHFDEPQCAAACPVDNTCVVDRALPRYQAPV</sequence>
<accession>P27394</accession>
<accession>Q9ANM1</accession>